<dbReference type="EMBL" id="Z48009">
    <property type="protein sequence ID" value="CAA88085.1"/>
    <property type="molecule type" value="Genomic_DNA"/>
</dbReference>
<dbReference type="PIR" id="T18621">
    <property type="entry name" value="T18621"/>
</dbReference>
<dbReference type="RefSeq" id="NP_496047.1">
    <property type="nucleotide sequence ID" value="NM_063646.4"/>
</dbReference>
<dbReference type="FunCoup" id="Q09210">
    <property type="interactions" value="5"/>
</dbReference>
<dbReference type="PaxDb" id="6239-AH6.12"/>
<dbReference type="EnsemblMetazoa" id="AH6.12.1">
    <property type="protein sequence ID" value="AH6.12.1"/>
    <property type="gene ID" value="WBGene00005034"/>
</dbReference>
<dbReference type="GeneID" id="191779"/>
<dbReference type="KEGG" id="cel:CELE_AH6.12"/>
<dbReference type="UCSC" id="AH6.12">
    <property type="organism name" value="c. elegans"/>
</dbReference>
<dbReference type="AGR" id="WB:WBGene00005034"/>
<dbReference type="CTD" id="191779"/>
<dbReference type="WormBase" id="AH6.12">
    <property type="protein sequence ID" value="CE01453"/>
    <property type="gene ID" value="WBGene00005034"/>
    <property type="gene designation" value="sra-8"/>
</dbReference>
<dbReference type="eggNOG" id="ENOG502TH3G">
    <property type="taxonomic scope" value="Eukaryota"/>
</dbReference>
<dbReference type="GeneTree" id="ENSGT00970000195848"/>
<dbReference type="HOGENOM" id="CLU_048025_0_1_1"/>
<dbReference type="InParanoid" id="Q09210"/>
<dbReference type="OMA" id="MSTCATQ"/>
<dbReference type="OrthoDB" id="5842356at2759"/>
<dbReference type="PhylomeDB" id="Q09210"/>
<dbReference type="PRO" id="PR:Q09210"/>
<dbReference type="Proteomes" id="UP000001940">
    <property type="component" value="Chromosome II"/>
</dbReference>
<dbReference type="GO" id="GO:0016020">
    <property type="term" value="C:membrane"/>
    <property type="evidence" value="ECO:0007669"/>
    <property type="project" value="UniProtKB-SubCell"/>
</dbReference>
<dbReference type="GO" id="GO:0004930">
    <property type="term" value="F:G protein-coupled receptor activity"/>
    <property type="evidence" value="ECO:0007669"/>
    <property type="project" value="InterPro"/>
</dbReference>
<dbReference type="GO" id="GO:0004984">
    <property type="term" value="F:olfactory receptor activity"/>
    <property type="evidence" value="ECO:0000318"/>
    <property type="project" value="GO_Central"/>
</dbReference>
<dbReference type="GO" id="GO:0050907">
    <property type="term" value="P:detection of chemical stimulus involved in sensory perception"/>
    <property type="evidence" value="ECO:0000318"/>
    <property type="project" value="GO_Central"/>
</dbReference>
<dbReference type="InterPro" id="IPR000344">
    <property type="entry name" value="7TM_GPCR_serpentine_rcpt_Sra"/>
</dbReference>
<dbReference type="InterPro" id="IPR051080">
    <property type="entry name" value="Nematode_rcpt-like_serp_alpha"/>
</dbReference>
<dbReference type="PANTHER" id="PTHR31357:SF5">
    <property type="entry name" value="SERPENTINE RECEPTOR CLASS ALPHA-1-RELATED"/>
    <property type="match status" value="1"/>
</dbReference>
<dbReference type="PANTHER" id="PTHR31357">
    <property type="entry name" value="SERPENTINE RECEPTOR CLASS ALPHA-10"/>
    <property type="match status" value="1"/>
</dbReference>
<dbReference type="Pfam" id="PF02117">
    <property type="entry name" value="7TM_GPCR_Sra"/>
    <property type="match status" value="1"/>
</dbReference>
<dbReference type="PRINTS" id="PR00697">
    <property type="entry name" value="TMPROTEINSRA"/>
</dbReference>
<accession>Q09210</accession>
<keyword id="KW-0472">Membrane</keyword>
<keyword id="KW-1185">Reference proteome</keyword>
<keyword id="KW-0812">Transmembrane</keyword>
<keyword id="KW-1133">Transmembrane helix</keyword>
<gene>
    <name type="primary">sra-8</name>
    <name type="ORF">AH6.12</name>
</gene>
<feature type="chain" id="PRO_0000104474" description="Serpentine receptor class alpha-8">
    <location>
        <begin position="1"/>
        <end position="329"/>
    </location>
</feature>
<feature type="transmembrane region" description="Helical" evidence="1">
    <location>
        <begin position="26"/>
        <end position="46"/>
    </location>
</feature>
<feature type="transmembrane region" description="Helical" evidence="1">
    <location>
        <begin position="60"/>
        <end position="80"/>
    </location>
</feature>
<feature type="transmembrane region" description="Helical" evidence="1">
    <location>
        <begin position="141"/>
        <end position="161"/>
    </location>
</feature>
<feature type="transmembrane region" description="Helical" evidence="1">
    <location>
        <begin position="187"/>
        <end position="207"/>
    </location>
</feature>
<feature type="transmembrane region" description="Helical" evidence="1">
    <location>
        <begin position="231"/>
        <end position="251"/>
    </location>
</feature>
<feature type="transmembrane region" description="Helical" evidence="1">
    <location>
        <begin position="273"/>
        <end position="293"/>
    </location>
</feature>
<proteinExistence type="inferred from homology"/>
<sequence>MENLTCASSVEQDRFASLNFIISQSVDLITSFFTYMLSIIAIKMVLKQSIFETSTKILLFLNIFYANLYQIVYSIDVVVILYKHFFMQEEVCSLLILESSCAPFLETLIGTSSGMMYCQTGLLIERFCATFLKTYNGKKTIFVGSFIAIVVMISTTSTGKLVIWDDPLDDAVLACFIFPKKSKARSTIHFYISTVVSLFNLAASVALNKYNKTLEYQVRFKICARFHKRQVIESTETICFLNFTQFVFMFIYSSGNSTLKSIRDYIQPETYNFWVVWCYTVPFIALTFPLLLIYKVKSTRGIRAQKIVQISNTKQTQDEHINQMKVMWE</sequence>
<comment type="subcellular location">
    <subcellularLocation>
        <location evidence="2">Membrane</location>
        <topology evidence="2">Multi-pass membrane protein</topology>
    </subcellularLocation>
</comment>
<comment type="similarity">
    <text evidence="2">Belongs to the nematode receptor-like protein sra family.</text>
</comment>
<name>SRA8_CAEEL</name>
<evidence type="ECO:0000255" key="1"/>
<evidence type="ECO:0000305" key="2"/>
<protein>
    <recommendedName>
        <fullName>Serpentine receptor class alpha-8</fullName>
        <shortName>Protein sra-8</shortName>
    </recommendedName>
</protein>
<reference key="1">
    <citation type="journal article" date="1998" name="Science">
        <title>Genome sequence of the nematode C. elegans: a platform for investigating biology.</title>
        <authorList>
            <consortium name="The C. elegans sequencing consortium"/>
        </authorList>
    </citation>
    <scope>NUCLEOTIDE SEQUENCE [LARGE SCALE GENOMIC DNA]</scope>
    <source>
        <strain>Bristol N2</strain>
    </source>
</reference>
<organism>
    <name type="scientific">Caenorhabditis elegans</name>
    <dbReference type="NCBI Taxonomy" id="6239"/>
    <lineage>
        <taxon>Eukaryota</taxon>
        <taxon>Metazoa</taxon>
        <taxon>Ecdysozoa</taxon>
        <taxon>Nematoda</taxon>
        <taxon>Chromadorea</taxon>
        <taxon>Rhabditida</taxon>
        <taxon>Rhabditina</taxon>
        <taxon>Rhabditomorpha</taxon>
        <taxon>Rhabditoidea</taxon>
        <taxon>Rhabditidae</taxon>
        <taxon>Peloderinae</taxon>
        <taxon>Caenorhabditis</taxon>
    </lineage>
</organism>